<organism>
    <name type="scientific">Methanosarcina mazei (strain ATCC BAA-159 / DSM 3647 / Goe1 / Go1 / JCM 11833 / OCM 88)</name>
    <name type="common">Methanosarcina frisia</name>
    <dbReference type="NCBI Taxonomy" id="192952"/>
    <lineage>
        <taxon>Archaea</taxon>
        <taxon>Methanobacteriati</taxon>
        <taxon>Methanobacteriota</taxon>
        <taxon>Stenosarchaea group</taxon>
        <taxon>Methanomicrobia</taxon>
        <taxon>Methanosarcinales</taxon>
        <taxon>Methanosarcinaceae</taxon>
        <taxon>Methanosarcina</taxon>
    </lineage>
</organism>
<keyword id="KW-0963">Cytoplasm</keyword>
<keyword id="KW-0324">Glycolysis</keyword>
<keyword id="KW-0456">Lyase</keyword>
<keyword id="KW-0460">Magnesium</keyword>
<keyword id="KW-0479">Metal-binding</keyword>
<keyword id="KW-0964">Secreted</keyword>
<feature type="chain" id="PRO_0000134026" description="Enolase">
    <location>
        <begin position="1"/>
        <end position="428"/>
    </location>
</feature>
<feature type="active site" description="Proton donor" evidence="1">
    <location>
        <position position="217"/>
    </location>
</feature>
<feature type="active site" description="Proton acceptor" evidence="1">
    <location>
        <position position="345"/>
    </location>
</feature>
<feature type="binding site" evidence="1">
    <location>
        <position position="173"/>
    </location>
    <ligand>
        <name>(2R)-2-phosphoglycerate</name>
        <dbReference type="ChEBI" id="CHEBI:58289"/>
    </ligand>
</feature>
<feature type="binding site" evidence="1">
    <location>
        <position position="253"/>
    </location>
    <ligand>
        <name>Mg(2+)</name>
        <dbReference type="ChEBI" id="CHEBI:18420"/>
    </ligand>
</feature>
<feature type="binding site" evidence="1">
    <location>
        <position position="294"/>
    </location>
    <ligand>
        <name>Mg(2+)</name>
        <dbReference type="ChEBI" id="CHEBI:18420"/>
    </ligand>
</feature>
<feature type="binding site" evidence="1">
    <location>
        <position position="320"/>
    </location>
    <ligand>
        <name>Mg(2+)</name>
        <dbReference type="ChEBI" id="CHEBI:18420"/>
    </ligand>
</feature>
<feature type="binding site" evidence="1">
    <location>
        <position position="345"/>
    </location>
    <ligand>
        <name>(2R)-2-phosphoglycerate</name>
        <dbReference type="ChEBI" id="CHEBI:58289"/>
    </ligand>
</feature>
<feature type="binding site" evidence="1">
    <location>
        <position position="374"/>
    </location>
    <ligand>
        <name>(2R)-2-phosphoglycerate</name>
        <dbReference type="ChEBI" id="CHEBI:58289"/>
    </ligand>
</feature>
<feature type="binding site" evidence="1">
    <location>
        <position position="375"/>
    </location>
    <ligand>
        <name>(2R)-2-phosphoglycerate</name>
        <dbReference type="ChEBI" id="CHEBI:58289"/>
    </ligand>
</feature>
<feature type="binding site" evidence="1">
    <location>
        <position position="396"/>
    </location>
    <ligand>
        <name>(2R)-2-phosphoglycerate</name>
        <dbReference type="ChEBI" id="CHEBI:58289"/>
    </ligand>
</feature>
<sequence length="428" mass="46609">MSYIGLQQDSGEYKIQKIHAREILDSRGNPTVEVDVFTPKGFGRASVPSGASTGTNEALELRDADPNRYGGKGVLTAVKNVNTIIQKELLGLDVRNQREIDELMIELDETENKSNLGANAILGVSMAVAKAAADSLNIPLYRYFGGSNAFTLPVPTMNVLNGGKHAGNELAIQEFMIQPKGAETFYEALQIGAEIYQTLGKFLENKYGRSSTNVGYEGGYAPKMGESTEALDALVHAIEEAGYTESEVTIGLDAAATEFYEEEFYNIDGKKLAAPELLDYYVELVNSYPILSIEDPFYEEAFEDFEALTNELWDTIIVGDDLFVTNIERLSKGVDMGAANALLLKVNQIGSISEAFDAASMASRNGYTVIVSHRSAETEDTTISDLAVAIGAEMIKTGAPARGERTAKYNQLLRIEEDLGEVAHYVQL</sequence>
<comment type="function">
    <text evidence="1">Catalyzes the reversible conversion of 2-phosphoglycerate (2-PG) into phosphoenolpyruvate (PEP). It is essential for the degradation of carbohydrates via glycolysis.</text>
</comment>
<comment type="catalytic activity">
    <reaction evidence="1">
        <text>(2R)-2-phosphoglycerate = phosphoenolpyruvate + H2O</text>
        <dbReference type="Rhea" id="RHEA:10164"/>
        <dbReference type="ChEBI" id="CHEBI:15377"/>
        <dbReference type="ChEBI" id="CHEBI:58289"/>
        <dbReference type="ChEBI" id="CHEBI:58702"/>
        <dbReference type="EC" id="4.2.1.11"/>
    </reaction>
</comment>
<comment type="cofactor">
    <cofactor evidence="1">
        <name>Mg(2+)</name>
        <dbReference type="ChEBI" id="CHEBI:18420"/>
    </cofactor>
    <text evidence="1">Binds a second Mg(2+) ion via substrate during catalysis.</text>
</comment>
<comment type="pathway">
    <text evidence="1">Carbohydrate degradation; glycolysis; pyruvate from D-glyceraldehyde 3-phosphate: step 4/5.</text>
</comment>
<comment type="subcellular location">
    <subcellularLocation>
        <location evidence="1">Cytoplasm</location>
    </subcellularLocation>
    <subcellularLocation>
        <location evidence="1">Secreted</location>
    </subcellularLocation>
    <subcellularLocation>
        <location evidence="1">Cell surface</location>
    </subcellularLocation>
    <text evidence="1">Fractions of enolase are present in both the cytoplasm and on the cell surface.</text>
</comment>
<comment type="similarity">
    <text evidence="1">Belongs to the enolase family.</text>
</comment>
<gene>
    <name evidence="1" type="primary">eno</name>
    <name type="ordered locus">MM_2836</name>
</gene>
<evidence type="ECO:0000255" key="1">
    <source>
        <dbReference type="HAMAP-Rule" id="MF_00318"/>
    </source>
</evidence>
<reference key="1">
    <citation type="journal article" date="2002" name="J. Mol. Microbiol. Biotechnol.">
        <title>The genome of Methanosarcina mazei: evidence for lateral gene transfer between Bacteria and Archaea.</title>
        <authorList>
            <person name="Deppenmeier U."/>
            <person name="Johann A."/>
            <person name="Hartsch T."/>
            <person name="Merkl R."/>
            <person name="Schmitz R.A."/>
            <person name="Martinez-Arias R."/>
            <person name="Henne A."/>
            <person name="Wiezer A."/>
            <person name="Baeumer S."/>
            <person name="Jacobi C."/>
            <person name="Brueggemann H."/>
            <person name="Lienard T."/>
            <person name="Christmann A."/>
            <person name="Boemecke M."/>
            <person name="Steckel S."/>
            <person name="Bhattacharyya A."/>
            <person name="Lykidis A."/>
            <person name="Overbeek R."/>
            <person name="Klenk H.-P."/>
            <person name="Gunsalus R.P."/>
            <person name="Fritz H.-J."/>
            <person name="Gottschalk G."/>
        </authorList>
    </citation>
    <scope>NUCLEOTIDE SEQUENCE [LARGE SCALE GENOMIC DNA]</scope>
    <source>
        <strain>ATCC BAA-159 / DSM 3647 / Goe1 / Go1 / JCM 11833 / OCM 88</strain>
    </source>
</reference>
<dbReference type="EC" id="4.2.1.11" evidence="1"/>
<dbReference type="EMBL" id="AE008384">
    <property type="protein sequence ID" value="AAM32532.1"/>
    <property type="molecule type" value="Genomic_DNA"/>
</dbReference>
<dbReference type="RefSeq" id="WP_011034744.1">
    <property type="nucleotide sequence ID" value="NC_003901.1"/>
</dbReference>
<dbReference type="SMR" id="Q8PT81"/>
<dbReference type="GeneID" id="82161923"/>
<dbReference type="KEGG" id="mma:MM_2836"/>
<dbReference type="PATRIC" id="fig|192952.21.peg.3276"/>
<dbReference type="eggNOG" id="arCOG01169">
    <property type="taxonomic scope" value="Archaea"/>
</dbReference>
<dbReference type="HOGENOM" id="CLU_031223_2_1_2"/>
<dbReference type="UniPathway" id="UPA00109">
    <property type="reaction ID" value="UER00187"/>
</dbReference>
<dbReference type="Proteomes" id="UP000000595">
    <property type="component" value="Chromosome"/>
</dbReference>
<dbReference type="GO" id="GO:0009986">
    <property type="term" value="C:cell surface"/>
    <property type="evidence" value="ECO:0007669"/>
    <property type="project" value="UniProtKB-SubCell"/>
</dbReference>
<dbReference type="GO" id="GO:0005576">
    <property type="term" value="C:extracellular region"/>
    <property type="evidence" value="ECO:0007669"/>
    <property type="project" value="UniProtKB-SubCell"/>
</dbReference>
<dbReference type="GO" id="GO:0000015">
    <property type="term" value="C:phosphopyruvate hydratase complex"/>
    <property type="evidence" value="ECO:0007669"/>
    <property type="project" value="InterPro"/>
</dbReference>
<dbReference type="GO" id="GO:0000287">
    <property type="term" value="F:magnesium ion binding"/>
    <property type="evidence" value="ECO:0007669"/>
    <property type="project" value="UniProtKB-UniRule"/>
</dbReference>
<dbReference type="GO" id="GO:0004634">
    <property type="term" value="F:phosphopyruvate hydratase activity"/>
    <property type="evidence" value="ECO:0007669"/>
    <property type="project" value="UniProtKB-UniRule"/>
</dbReference>
<dbReference type="GO" id="GO:0006096">
    <property type="term" value="P:glycolytic process"/>
    <property type="evidence" value="ECO:0007669"/>
    <property type="project" value="UniProtKB-UniRule"/>
</dbReference>
<dbReference type="CDD" id="cd03313">
    <property type="entry name" value="enolase"/>
    <property type="match status" value="1"/>
</dbReference>
<dbReference type="FunFam" id="3.30.390.10:FF:000001">
    <property type="entry name" value="Enolase"/>
    <property type="match status" value="1"/>
</dbReference>
<dbReference type="Gene3D" id="3.20.20.120">
    <property type="entry name" value="Enolase-like C-terminal domain"/>
    <property type="match status" value="1"/>
</dbReference>
<dbReference type="Gene3D" id="3.30.390.10">
    <property type="entry name" value="Enolase-like, N-terminal domain"/>
    <property type="match status" value="1"/>
</dbReference>
<dbReference type="HAMAP" id="MF_00318">
    <property type="entry name" value="Enolase"/>
    <property type="match status" value="1"/>
</dbReference>
<dbReference type="InterPro" id="IPR000941">
    <property type="entry name" value="Enolase"/>
</dbReference>
<dbReference type="InterPro" id="IPR036849">
    <property type="entry name" value="Enolase-like_C_sf"/>
</dbReference>
<dbReference type="InterPro" id="IPR029017">
    <property type="entry name" value="Enolase-like_N"/>
</dbReference>
<dbReference type="InterPro" id="IPR020810">
    <property type="entry name" value="Enolase_C"/>
</dbReference>
<dbReference type="InterPro" id="IPR020809">
    <property type="entry name" value="Enolase_CS"/>
</dbReference>
<dbReference type="InterPro" id="IPR020811">
    <property type="entry name" value="Enolase_N"/>
</dbReference>
<dbReference type="NCBIfam" id="TIGR01060">
    <property type="entry name" value="eno"/>
    <property type="match status" value="1"/>
</dbReference>
<dbReference type="PANTHER" id="PTHR11902">
    <property type="entry name" value="ENOLASE"/>
    <property type="match status" value="1"/>
</dbReference>
<dbReference type="PANTHER" id="PTHR11902:SF1">
    <property type="entry name" value="ENOLASE"/>
    <property type="match status" value="1"/>
</dbReference>
<dbReference type="Pfam" id="PF00113">
    <property type="entry name" value="Enolase_C"/>
    <property type="match status" value="1"/>
</dbReference>
<dbReference type="Pfam" id="PF03952">
    <property type="entry name" value="Enolase_N"/>
    <property type="match status" value="1"/>
</dbReference>
<dbReference type="PIRSF" id="PIRSF001400">
    <property type="entry name" value="Enolase"/>
    <property type="match status" value="1"/>
</dbReference>
<dbReference type="PRINTS" id="PR00148">
    <property type="entry name" value="ENOLASE"/>
</dbReference>
<dbReference type="SFLD" id="SFLDF00002">
    <property type="entry name" value="enolase"/>
    <property type="match status" value="1"/>
</dbReference>
<dbReference type="SFLD" id="SFLDG00178">
    <property type="entry name" value="enolase"/>
    <property type="match status" value="1"/>
</dbReference>
<dbReference type="SMART" id="SM01192">
    <property type="entry name" value="Enolase_C"/>
    <property type="match status" value="1"/>
</dbReference>
<dbReference type="SMART" id="SM01193">
    <property type="entry name" value="Enolase_N"/>
    <property type="match status" value="1"/>
</dbReference>
<dbReference type="SUPFAM" id="SSF51604">
    <property type="entry name" value="Enolase C-terminal domain-like"/>
    <property type="match status" value="1"/>
</dbReference>
<dbReference type="SUPFAM" id="SSF54826">
    <property type="entry name" value="Enolase N-terminal domain-like"/>
    <property type="match status" value="1"/>
</dbReference>
<dbReference type="PROSITE" id="PS00164">
    <property type="entry name" value="ENOLASE"/>
    <property type="match status" value="1"/>
</dbReference>
<accession>Q8PT81</accession>
<protein>
    <recommendedName>
        <fullName evidence="1">Enolase</fullName>
        <ecNumber evidence="1">4.2.1.11</ecNumber>
    </recommendedName>
    <alternativeName>
        <fullName evidence="1">2-phospho-D-glycerate hydro-lyase</fullName>
    </alternativeName>
    <alternativeName>
        <fullName evidence="1">2-phosphoglycerate dehydratase</fullName>
    </alternativeName>
</protein>
<proteinExistence type="inferred from homology"/>
<name>ENO_METMA</name>